<organism>
    <name type="scientific">Anoxybacillus flavithermus (strain DSM 21510 / WK1)</name>
    <dbReference type="NCBI Taxonomy" id="491915"/>
    <lineage>
        <taxon>Bacteria</taxon>
        <taxon>Bacillati</taxon>
        <taxon>Bacillota</taxon>
        <taxon>Bacilli</taxon>
        <taxon>Bacillales</taxon>
        <taxon>Anoxybacillaceae</taxon>
        <taxon>Anoxybacillus</taxon>
    </lineage>
</organism>
<gene>
    <name evidence="1" type="primary">mtnN</name>
    <name type="ordered locus">Aflv_0759</name>
</gene>
<proteinExistence type="inferred from homology"/>
<keyword id="KW-0028">Amino-acid biosynthesis</keyword>
<keyword id="KW-0378">Hydrolase</keyword>
<keyword id="KW-0486">Methionine biosynthesis</keyword>
<reference key="1">
    <citation type="journal article" date="2008" name="Genome Biol.">
        <title>Encapsulated in silica: genome, proteome and physiology of the thermophilic bacterium Anoxybacillus flavithermus WK1.</title>
        <authorList>
            <person name="Saw J.H."/>
            <person name="Mountain B.W."/>
            <person name="Feng L."/>
            <person name="Omelchenko M.V."/>
            <person name="Hou S."/>
            <person name="Saito J.A."/>
            <person name="Stott M.B."/>
            <person name="Li D."/>
            <person name="Zhao G."/>
            <person name="Wu J."/>
            <person name="Galperin M.Y."/>
            <person name="Koonin E.V."/>
            <person name="Makarova K.S."/>
            <person name="Wolf Y.I."/>
            <person name="Rigden D.J."/>
            <person name="Dunfield P.F."/>
            <person name="Wang L."/>
            <person name="Alam M."/>
        </authorList>
    </citation>
    <scope>NUCLEOTIDE SEQUENCE [LARGE SCALE GENOMIC DNA]</scope>
    <source>
        <strain>DSM 21510 / WK1</strain>
    </source>
</reference>
<accession>B7GIU7</accession>
<evidence type="ECO:0000255" key="1">
    <source>
        <dbReference type="HAMAP-Rule" id="MF_01684"/>
    </source>
</evidence>
<feature type="chain" id="PRO_1000187406" description="5'-methylthioadenosine/S-adenosylhomocysteine nucleosidase">
    <location>
        <begin position="1"/>
        <end position="232"/>
    </location>
</feature>
<feature type="active site" description="Proton acceptor" evidence="1">
    <location>
        <position position="12"/>
    </location>
</feature>
<feature type="active site" description="Proton donor" evidence="1">
    <location>
        <position position="198"/>
    </location>
</feature>
<feature type="binding site" evidence="1">
    <location>
        <position position="78"/>
    </location>
    <ligand>
        <name>substrate</name>
    </ligand>
</feature>
<feature type="binding site" evidence="1">
    <location>
        <position position="153"/>
    </location>
    <ligand>
        <name>substrate</name>
    </ligand>
</feature>
<feature type="binding site" evidence="1">
    <location>
        <begin position="174"/>
        <end position="175"/>
    </location>
    <ligand>
        <name>substrate</name>
    </ligand>
</feature>
<comment type="function">
    <text evidence="1">Catalyzes the irreversible cleavage of the glycosidic bond in both 5'-methylthioadenosine (MTA) and S-adenosylhomocysteine (SAH/AdoHcy) to adenine and the corresponding thioribose, 5'-methylthioribose and S-ribosylhomocysteine, respectively. Also cleaves 5'-deoxyadenosine, a toxic by-product of radical S-adenosylmethionine (SAM) enzymes, into 5-deoxyribose and adenine.</text>
</comment>
<comment type="catalytic activity">
    <reaction evidence="1">
        <text>S-adenosyl-L-homocysteine + H2O = S-(5-deoxy-D-ribos-5-yl)-L-homocysteine + adenine</text>
        <dbReference type="Rhea" id="RHEA:17805"/>
        <dbReference type="ChEBI" id="CHEBI:15377"/>
        <dbReference type="ChEBI" id="CHEBI:16708"/>
        <dbReference type="ChEBI" id="CHEBI:57856"/>
        <dbReference type="ChEBI" id="CHEBI:58195"/>
        <dbReference type="EC" id="3.2.2.9"/>
    </reaction>
</comment>
<comment type="catalytic activity">
    <reaction evidence="1">
        <text>S-methyl-5'-thioadenosine + H2O = 5-(methylsulfanyl)-D-ribose + adenine</text>
        <dbReference type="Rhea" id="RHEA:13617"/>
        <dbReference type="ChEBI" id="CHEBI:15377"/>
        <dbReference type="ChEBI" id="CHEBI:16708"/>
        <dbReference type="ChEBI" id="CHEBI:17509"/>
        <dbReference type="ChEBI" id="CHEBI:78440"/>
        <dbReference type="EC" id="3.2.2.9"/>
    </reaction>
</comment>
<comment type="catalytic activity">
    <reaction evidence="1">
        <text>5'-deoxyadenosine + H2O = 5-deoxy-D-ribose + adenine</text>
        <dbReference type="Rhea" id="RHEA:29859"/>
        <dbReference type="ChEBI" id="CHEBI:15377"/>
        <dbReference type="ChEBI" id="CHEBI:16708"/>
        <dbReference type="ChEBI" id="CHEBI:17319"/>
        <dbReference type="ChEBI" id="CHEBI:149540"/>
        <dbReference type="EC" id="3.2.2.9"/>
    </reaction>
    <physiologicalReaction direction="left-to-right" evidence="1">
        <dbReference type="Rhea" id="RHEA:29860"/>
    </physiologicalReaction>
</comment>
<comment type="pathway">
    <text evidence="1">Amino-acid biosynthesis; L-methionine biosynthesis via salvage pathway; S-methyl-5-thio-alpha-D-ribose 1-phosphate from S-methyl-5'-thioadenosine (hydrolase route): step 1/2.</text>
</comment>
<comment type="similarity">
    <text evidence="1">Belongs to the PNP/UDP phosphorylase family. MtnN subfamily.</text>
</comment>
<protein>
    <recommendedName>
        <fullName evidence="1">5'-methylthioadenosine/S-adenosylhomocysteine nucleosidase</fullName>
        <shortName evidence="1">MTA/SAH nucleosidase</shortName>
        <shortName evidence="1">MTAN</shortName>
        <ecNumber evidence="1">3.2.2.9</ecNumber>
    </recommendedName>
    <alternativeName>
        <fullName evidence="1">5'-deoxyadenosine nucleosidase</fullName>
        <shortName evidence="1">DOA nucleosidase</shortName>
        <shortName evidence="1">dAdo nucleosidase</shortName>
    </alternativeName>
    <alternativeName>
        <fullName evidence="1">5'-methylthioadenosine nucleosidase</fullName>
        <shortName evidence="1">MTA nucleosidase</shortName>
    </alternativeName>
    <alternativeName>
        <fullName evidence="1">S-adenosylhomocysteine nucleosidase</fullName>
        <shortName evidence="1">AdoHcy nucleosidase</shortName>
        <shortName evidence="1">SAH nucleosidase</shortName>
        <shortName evidence="1">SRH nucleosidase</shortName>
    </alternativeName>
</protein>
<dbReference type="EC" id="3.2.2.9" evidence="1"/>
<dbReference type="EMBL" id="CP000922">
    <property type="protein sequence ID" value="ACJ33138.1"/>
    <property type="molecule type" value="Genomic_DNA"/>
</dbReference>
<dbReference type="RefSeq" id="WP_012574437.1">
    <property type="nucleotide sequence ID" value="NC_011567.1"/>
</dbReference>
<dbReference type="SMR" id="B7GIU7"/>
<dbReference type="STRING" id="491915.Aflv_0759"/>
<dbReference type="GeneID" id="7037016"/>
<dbReference type="KEGG" id="afl:Aflv_0759"/>
<dbReference type="PATRIC" id="fig|491915.6.peg.775"/>
<dbReference type="eggNOG" id="COG0775">
    <property type="taxonomic scope" value="Bacteria"/>
</dbReference>
<dbReference type="HOGENOM" id="CLU_031248_2_2_9"/>
<dbReference type="UniPathway" id="UPA00904">
    <property type="reaction ID" value="UER00871"/>
</dbReference>
<dbReference type="Proteomes" id="UP000000742">
    <property type="component" value="Chromosome"/>
</dbReference>
<dbReference type="GO" id="GO:0005829">
    <property type="term" value="C:cytosol"/>
    <property type="evidence" value="ECO:0007669"/>
    <property type="project" value="TreeGrafter"/>
</dbReference>
<dbReference type="GO" id="GO:0008782">
    <property type="term" value="F:adenosylhomocysteine nucleosidase activity"/>
    <property type="evidence" value="ECO:0007669"/>
    <property type="project" value="UniProtKB-UniRule"/>
</dbReference>
<dbReference type="GO" id="GO:0008930">
    <property type="term" value="F:methylthioadenosine nucleosidase activity"/>
    <property type="evidence" value="ECO:0007669"/>
    <property type="project" value="UniProtKB-UniRule"/>
</dbReference>
<dbReference type="GO" id="GO:0019509">
    <property type="term" value="P:L-methionine salvage from methylthioadenosine"/>
    <property type="evidence" value="ECO:0007669"/>
    <property type="project" value="UniProtKB-UniRule"/>
</dbReference>
<dbReference type="GO" id="GO:0019284">
    <property type="term" value="P:L-methionine salvage from S-adenosylmethionine"/>
    <property type="evidence" value="ECO:0007669"/>
    <property type="project" value="TreeGrafter"/>
</dbReference>
<dbReference type="GO" id="GO:0009164">
    <property type="term" value="P:nucleoside catabolic process"/>
    <property type="evidence" value="ECO:0007669"/>
    <property type="project" value="InterPro"/>
</dbReference>
<dbReference type="CDD" id="cd09008">
    <property type="entry name" value="MTAN"/>
    <property type="match status" value="1"/>
</dbReference>
<dbReference type="FunFam" id="3.40.50.1580:FF:000001">
    <property type="entry name" value="MTA/SAH nucleosidase family protein"/>
    <property type="match status" value="1"/>
</dbReference>
<dbReference type="Gene3D" id="3.40.50.1580">
    <property type="entry name" value="Nucleoside phosphorylase domain"/>
    <property type="match status" value="1"/>
</dbReference>
<dbReference type="HAMAP" id="MF_01684">
    <property type="entry name" value="Salvage_MtnN"/>
    <property type="match status" value="1"/>
</dbReference>
<dbReference type="InterPro" id="IPR010049">
    <property type="entry name" value="MTA_SAH_Nsdase"/>
</dbReference>
<dbReference type="InterPro" id="IPR000845">
    <property type="entry name" value="Nucleoside_phosphorylase_d"/>
</dbReference>
<dbReference type="InterPro" id="IPR035994">
    <property type="entry name" value="Nucleoside_phosphorylase_sf"/>
</dbReference>
<dbReference type="NCBIfam" id="TIGR01704">
    <property type="entry name" value="MTA_SAH-Nsdase"/>
    <property type="match status" value="1"/>
</dbReference>
<dbReference type="NCBIfam" id="NF004079">
    <property type="entry name" value="PRK05584.1"/>
    <property type="match status" value="1"/>
</dbReference>
<dbReference type="PANTHER" id="PTHR46832">
    <property type="entry name" value="5'-METHYLTHIOADENOSINE/S-ADENOSYLHOMOCYSTEINE NUCLEOSIDASE"/>
    <property type="match status" value="1"/>
</dbReference>
<dbReference type="PANTHER" id="PTHR46832:SF1">
    <property type="entry name" value="5'-METHYLTHIOADENOSINE_S-ADENOSYLHOMOCYSTEINE NUCLEOSIDASE"/>
    <property type="match status" value="1"/>
</dbReference>
<dbReference type="Pfam" id="PF01048">
    <property type="entry name" value="PNP_UDP_1"/>
    <property type="match status" value="1"/>
</dbReference>
<dbReference type="SUPFAM" id="SSF53167">
    <property type="entry name" value="Purine and uridine phosphorylases"/>
    <property type="match status" value="1"/>
</dbReference>
<sequence length="232" mass="24884">MNIAIIGAMEEEVAILREKIANRTETTVANCSFYSGTLDGANVVLLKSGIGKVNAAMSTTILLERFAPDVVINTGSAGGFAPSLNVGDIVISTEVVHHDVDVTAFGYAYGQVPGMPARYAADERLIQAAETSAAHIRDIQVAKGLIATGDSFMHDPARVDFVRTQFPDLYAVEMEAAAIAQVCHQFNVPFVVIRALSDIAGKESNVSFEQFLQKAALHSSELVQLMVNELNK</sequence>
<name>MTNN_ANOFW</name>